<name>EAA1_AMBTI</name>
<proteinExistence type="evidence at protein level"/>
<accession>O57321</accession>
<organism>
    <name type="scientific">Ambystoma tigrinum</name>
    <name type="common">Eastern tiger salamander</name>
    <dbReference type="NCBI Taxonomy" id="8305"/>
    <lineage>
        <taxon>Eukaryota</taxon>
        <taxon>Metazoa</taxon>
        <taxon>Chordata</taxon>
        <taxon>Craniata</taxon>
        <taxon>Vertebrata</taxon>
        <taxon>Euteleostomi</taxon>
        <taxon>Amphibia</taxon>
        <taxon>Batrachia</taxon>
        <taxon>Caudata</taxon>
        <taxon>Salamandroidea</taxon>
        <taxon>Ambystomatidae</taxon>
        <taxon>Ambystoma</taxon>
    </lineage>
</organism>
<comment type="function">
    <text evidence="3 6 7">Sodium-dependent, high-affinity amino acid transporter that mediates the uptake of L-glutamate and also L-aspartate and D-aspartate (PubMed:17008380, PubMed:9425012). Functions as a symporter that transports one amino acid molecule together with two or three Na(+) ions and one proton, in parallel with the counter-transport of one K(+) ion (PubMed:17008380). Plays a redundant role in the rapid removal of released glutamate from the synaptic cleft, which is essential for terminating the postsynaptic action of glutamate (By similarity).</text>
</comment>
<comment type="catalytic activity">
    <reaction evidence="2">
        <text>K(+)(in) + L-glutamate(out) + 3 Na(+)(out) + H(+)(out) = K(+)(out) + L-glutamate(in) + 3 Na(+)(in) + H(+)(in)</text>
        <dbReference type="Rhea" id="RHEA:70699"/>
        <dbReference type="ChEBI" id="CHEBI:15378"/>
        <dbReference type="ChEBI" id="CHEBI:29101"/>
        <dbReference type="ChEBI" id="CHEBI:29103"/>
        <dbReference type="ChEBI" id="CHEBI:29985"/>
    </reaction>
</comment>
<comment type="catalytic activity">
    <reaction evidence="2">
        <text>K(+)(in) + L-aspartate(out) + 3 Na(+)(out) + H(+)(out) = K(+)(out) + L-aspartate(in) + 3 Na(+)(in) + H(+)(in)</text>
        <dbReference type="Rhea" id="RHEA:70851"/>
        <dbReference type="ChEBI" id="CHEBI:15378"/>
        <dbReference type="ChEBI" id="CHEBI:29101"/>
        <dbReference type="ChEBI" id="CHEBI:29103"/>
        <dbReference type="ChEBI" id="CHEBI:29991"/>
    </reaction>
</comment>
<comment type="catalytic activity">
    <reaction evidence="2">
        <text>D-aspartate(out) + K(+)(in) + 3 Na(+)(out) + H(+)(out) = D-aspartate(in) + K(+)(out) + 3 Na(+)(in) + H(+)(in)</text>
        <dbReference type="Rhea" id="RHEA:71379"/>
        <dbReference type="ChEBI" id="CHEBI:15378"/>
        <dbReference type="ChEBI" id="CHEBI:29101"/>
        <dbReference type="ChEBI" id="CHEBI:29103"/>
        <dbReference type="ChEBI" id="CHEBI:29990"/>
    </reaction>
</comment>
<comment type="subunit">
    <text evidence="2">Homotrimer.</text>
</comment>
<comment type="subcellular location">
    <subcellularLocation>
        <location evidence="6 7">Cell membrane</location>
        <topology>Multi-pass membrane protein</topology>
    </subcellularLocation>
</comment>
<comment type="tissue specificity">
    <text evidence="7">Detected in retina (at protein level).</text>
</comment>
<comment type="domain">
    <text evidence="1">Contains eight transmembrane regions plus two helical hairpins that dip into the membrane. These helical hairpin structures play an important role in the transport process. The first enters the membrane from the cytoplasmic side, the second one from the extracellular side. During the transport cycle, the regions involved in amino acid transport, and especially the helical hairpins, move vertically by about 15-18 Angstroms, alternating between exposure to the aqueous phase and reinsertion in the lipid bilayer. In contrast, regions involved in trimerization do not move.</text>
</comment>
<comment type="similarity">
    <text evidence="10">Belongs to the dicarboxylate/amino acid:cation symporter (DAACS) (TC 2.A.23) family.</text>
</comment>
<keyword id="KW-0029">Amino-acid transport</keyword>
<keyword id="KW-1003">Cell membrane</keyword>
<keyword id="KW-0325">Glycoprotein</keyword>
<keyword id="KW-0472">Membrane</keyword>
<keyword id="KW-0479">Metal-binding</keyword>
<keyword id="KW-0630">Potassium</keyword>
<keyword id="KW-0915">Sodium</keyword>
<keyword id="KW-0769">Symport</keyword>
<keyword id="KW-0812">Transmembrane</keyword>
<keyword id="KW-1133">Transmembrane helix</keyword>
<keyword id="KW-0813">Transport</keyword>
<feature type="chain" id="PRO_0000202060" description="Excitatory amino acid transporter 1">
    <location>
        <begin position="1"/>
        <end position="543"/>
    </location>
</feature>
<feature type="topological domain" description="Cytoplasmic" evidence="2">
    <location>
        <begin position="1"/>
        <end position="47"/>
    </location>
</feature>
<feature type="transmembrane region" description="Helical; Name=1" evidence="2">
    <location>
        <begin position="48"/>
        <end position="68"/>
    </location>
</feature>
<feature type="topological domain" description="Extracellular" evidence="2">
    <location>
        <begin position="69"/>
        <end position="86"/>
    </location>
</feature>
<feature type="transmembrane region" description="Helical; Name=2" evidence="2">
    <location>
        <begin position="87"/>
        <end position="108"/>
    </location>
</feature>
<feature type="topological domain" description="Cytoplasmic" evidence="2">
    <location>
        <begin position="109"/>
        <end position="122"/>
    </location>
</feature>
<feature type="transmembrane region" description="Helical; Name=3" evidence="2">
    <location>
        <begin position="123"/>
        <end position="145"/>
    </location>
</feature>
<feature type="topological domain" description="Extracellular" evidence="2">
    <location>
        <begin position="146"/>
        <end position="237"/>
    </location>
</feature>
<feature type="transmembrane region" description="Helical; Name=4" evidence="2">
    <location>
        <begin position="238"/>
        <end position="261"/>
    </location>
</feature>
<feature type="topological domain" description="Cytoplasmic" evidence="2">
    <location>
        <begin position="262"/>
        <end position="270"/>
    </location>
</feature>
<feature type="transmembrane region" description="Helical; Name=5" evidence="2">
    <location>
        <begin position="271"/>
        <end position="298"/>
    </location>
</feature>
<feature type="topological domain" description="Extracellular" evidence="2">
    <location>
        <begin position="299"/>
        <end position="319"/>
    </location>
</feature>
<feature type="transmembrane region" description="Helical; Name=6" evidence="2">
    <location>
        <begin position="320"/>
        <end position="341"/>
    </location>
</feature>
<feature type="topological domain" description="Cytoplasmic" evidence="2">
    <location>
        <begin position="342"/>
        <end position="346"/>
    </location>
</feature>
<feature type="intramembrane region" description="Discontinuously helical" evidence="2">
    <location>
        <begin position="347"/>
        <end position="377"/>
    </location>
</feature>
<feature type="topological domain" description="Cytoplasmic" evidence="2">
    <location>
        <begin position="378"/>
        <end position="386"/>
    </location>
</feature>
<feature type="transmembrane region" description="Helical; Name=7" evidence="2">
    <location>
        <begin position="387"/>
        <end position="413"/>
    </location>
</feature>
<feature type="topological domain" description="Extracellular" evidence="2">
    <location>
        <begin position="414"/>
        <end position="426"/>
    </location>
</feature>
<feature type="intramembrane region" description="Discontinuously helical" evidence="2">
    <location>
        <begin position="427"/>
        <end position="460"/>
    </location>
</feature>
<feature type="topological domain" description="Extracellular" evidence="2">
    <location>
        <begin position="461"/>
        <end position="473"/>
    </location>
</feature>
<feature type="transmembrane region" description="Helical; Name=8" evidence="2">
    <location>
        <begin position="474"/>
        <end position="495"/>
    </location>
</feature>
<feature type="topological domain" description="Cytoplasmic" evidence="2">
    <location>
        <begin position="496"/>
        <end position="543"/>
    </location>
</feature>
<feature type="region of interest" description="Disordered" evidence="5">
    <location>
        <begin position="521"/>
        <end position="543"/>
    </location>
</feature>
<feature type="compositionally biased region" description="Basic and acidic residues" evidence="5">
    <location>
        <begin position="532"/>
        <end position="543"/>
    </location>
</feature>
<feature type="binding site" evidence="1">
    <location>
        <begin position="364"/>
        <end position="366"/>
    </location>
    <ligand>
        <name>L-aspartate</name>
        <dbReference type="ChEBI" id="CHEBI:29991"/>
    </ligand>
</feature>
<feature type="binding site" evidence="1">
    <location>
        <position position="395"/>
    </location>
    <ligand>
        <name>Na(+)</name>
        <dbReference type="ChEBI" id="CHEBI:29101"/>
        <label>1</label>
    </ligand>
</feature>
<feature type="binding site" evidence="1">
    <location>
        <position position="397"/>
    </location>
    <ligand>
        <name>Na(+)</name>
        <dbReference type="ChEBI" id="CHEBI:29101"/>
        <label>2</label>
    </ligand>
</feature>
<feature type="binding site" evidence="1">
    <location>
        <position position="399"/>
    </location>
    <ligand>
        <name>Na(+)</name>
        <dbReference type="ChEBI" id="CHEBI:29101"/>
        <label>1</label>
    </ligand>
</feature>
<feature type="binding site" evidence="1">
    <location>
        <position position="403"/>
    </location>
    <ligand>
        <name>L-aspartate</name>
        <dbReference type="ChEBI" id="CHEBI:29991"/>
    </ligand>
</feature>
<feature type="binding site" evidence="2">
    <location>
        <begin position="444"/>
        <end position="448"/>
    </location>
    <ligand>
        <name>L-aspartate</name>
        <dbReference type="ChEBI" id="CHEBI:29991"/>
    </ligand>
</feature>
<feature type="binding site" evidence="1">
    <location>
        <position position="477"/>
    </location>
    <ligand>
        <name>L-aspartate</name>
        <dbReference type="ChEBI" id="CHEBI:29991"/>
    </ligand>
</feature>
<feature type="binding site" evidence="1">
    <location>
        <position position="484"/>
    </location>
    <ligand>
        <name>L-aspartate</name>
        <dbReference type="ChEBI" id="CHEBI:29991"/>
    </ligand>
</feature>
<feature type="binding site" evidence="1">
    <location>
        <position position="484"/>
    </location>
    <ligand>
        <name>Na(+)</name>
        <dbReference type="ChEBI" id="CHEBI:29101"/>
        <label>1</label>
    </ligand>
</feature>
<feature type="binding site" evidence="1">
    <location>
        <position position="488"/>
    </location>
    <ligand>
        <name>Na(+)</name>
        <dbReference type="ChEBI" id="CHEBI:29101"/>
        <label>1</label>
    </ligand>
</feature>
<feature type="glycosylation site" description="N-linked (GlcNAc...) asparagine" evidence="4">
    <location>
        <position position="206"/>
    </location>
</feature>
<feature type="glycosylation site" description="N-linked (GlcNAc...) asparagine" evidence="4">
    <location>
        <position position="217"/>
    </location>
</feature>
<reference key="1">
    <citation type="journal article" date="1998" name="J. Neurosci.">
        <title>Excitatory amino acid transporters of the salamander retina: identification, localization, and function.</title>
        <authorList>
            <person name="Eliasof S."/>
            <person name="Arriza J.L."/>
            <person name="Leighton B.H."/>
            <person name="Kavanaugh M.P."/>
            <person name="Amara S.G."/>
        </authorList>
    </citation>
    <scope>NUCLEOTIDE SEQUENCE [MRNA]</scope>
    <scope>FUNCTION</scope>
    <scope>TISSUE SPECIFICITY</scope>
    <scope>SUBCELLULAR LOCATION</scope>
</reference>
<reference key="2">
    <citation type="journal article" date="2006" name="J. Physiol. (Lond.)">
        <title>The ionic stoichiometry of the GLAST glutamate transporter in salamander retinal glia.</title>
        <authorList>
            <person name="Owe S.G."/>
            <person name="Marcaggi P."/>
            <person name="Attwell D."/>
        </authorList>
    </citation>
    <scope>FUNCTION</scope>
    <scope>SUBCELLULAR LOCATION</scope>
</reference>
<sequence length="543" mass="59395">MTKSNGEDPRAGSRMERFQQGVRQRTLLAKKKVQNITKDDVKGFLKRNGFVLFTVIAVVVGSILGFSVRSYHMTFRELKYFSFPGELLMRMLQMLVLPLIVSSLVTGMAALDSKASGKMGLRAVVYYMTTTVIAVFIGIVIVIIVHPGKGTKEHMHREGKIEPVTAADAFLDLIRNMFPPNMVEACFKQFKTSYEKKIFKVTMPANETAVMTSVLNNVSEAMETLTKMREEMIPVPGAVNGVNALGLVVFSMCFGLVIGNMKEQGKALKDFFDSLNEAIMRLVAVIMWYAPIGILFLIAGKIAEMEDMGVVGGQLGMYTVTVIIGLLIHAVIVLPLLYFAVTRKNPWVFIGGILQALITALGTSSSSATLPITFKCLEENNKVDKRVTRFVLPVGATINMDGTALYEALAAIFIAQVNNYDLNFGQILTISITATAASIGAAGIPQAGLVTMVIVLTSVGLPTDDITLIIAVDWFLDRLRTTTNVLGDSLGAGIVEHLSRHELQSGDAEMGNSVIEENEMKKPYQLVSQENELEKPIDSETKM</sequence>
<gene>
    <name type="primary">SLC1A3</name>
    <name type="synonym">EAAT1</name>
</gene>
<protein>
    <recommendedName>
        <fullName evidence="9">Excitatory amino acid transporter 1</fullName>
    </recommendedName>
    <alternativeName>
        <fullName evidence="9">SEAAT1</fullName>
    </alternativeName>
    <alternativeName>
        <fullName evidence="8">Sodium-dependent glutamate/aspartate transporter</fullName>
        <shortName evidence="8">GLAST</shortName>
    </alternativeName>
</protein>
<evidence type="ECO:0000250" key="1">
    <source>
        <dbReference type="UniProtKB" id="O59010"/>
    </source>
</evidence>
<evidence type="ECO:0000250" key="2">
    <source>
        <dbReference type="UniProtKB" id="P43003"/>
    </source>
</evidence>
<evidence type="ECO:0000250" key="3">
    <source>
        <dbReference type="UniProtKB" id="P56564"/>
    </source>
</evidence>
<evidence type="ECO:0000255" key="4"/>
<evidence type="ECO:0000256" key="5">
    <source>
        <dbReference type="SAM" id="MobiDB-lite"/>
    </source>
</evidence>
<evidence type="ECO:0000269" key="6">
    <source>
    </source>
</evidence>
<evidence type="ECO:0000269" key="7">
    <source>
    </source>
</evidence>
<evidence type="ECO:0000303" key="8">
    <source>
    </source>
</evidence>
<evidence type="ECO:0000303" key="9">
    <source>
    </source>
</evidence>
<evidence type="ECO:0000305" key="10"/>
<dbReference type="EMBL" id="AF018256">
    <property type="protein sequence ID" value="AAB88286.1"/>
    <property type="molecule type" value="mRNA"/>
</dbReference>
<dbReference type="SMR" id="O57321"/>
<dbReference type="GlyCosmos" id="O57321">
    <property type="glycosylation" value="2 sites, No reported glycans"/>
</dbReference>
<dbReference type="GO" id="GO:0005886">
    <property type="term" value="C:plasma membrane"/>
    <property type="evidence" value="ECO:0000250"/>
    <property type="project" value="UniProtKB"/>
</dbReference>
<dbReference type="GO" id="GO:0015501">
    <property type="term" value="F:glutamate:sodium symporter activity"/>
    <property type="evidence" value="ECO:0000250"/>
    <property type="project" value="UniProtKB"/>
</dbReference>
<dbReference type="GO" id="GO:0005314">
    <property type="term" value="F:high-affinity L-glutamate transmembrane transporter activity"/>
    <property type="evidence" value="ECO:0000250"/>
    <property type="project" value="UniProtKB"/>
</dbReference>
<dbReference type="GO" id="GO:0046872">
    <property type="term" value="F:metal ion binding"/>
    <property type="evidence" value="ECO:0007669"/>
    <property type="project" value="UniProtKB-KW"/>
</dbReference>
<dbReference type="GO" id="GO:0015175">
    <property type="term" value="F:neutral L-amino acid transmembrane transporter activity"/>
    <property type="evidence" value="ECO:0007669"/>
    <property type="project" value="TreeGrafter"/>
</dbReference>
<dbReference type="GO" id="GO:1902476">
    <property type="term" value="P:chloride transmembrane transport"/>
    <property type="evidence" value="ECO:0000250"/>
    <property type="project" value="UniProtKB"/>
</dbReference>
<dbReference type="GO" id="GO:0070779">
    <property type="term" value="P:D-aspartate import across plasma membrane"/>
    <property type="evidence" value="ECO:0000250"/>
    <property type="project" value="UniProtKB"/>
</dbReference>
<dbReference type="GO" id="GO:0140009">
    <property type="term" value="P:L-aspartate import across plasma membrane"/>
    <property type="evidence" value="ECO:0000250"/>
    <property type="project" value="UniProtKB"/>
</dbReference>
<dbReference type="GO" id="GO:0098712">
    <property type="term" value="P:L-glutamate import across plasma membrane"/>
    <property type="evidence" value="ECO:0000250"/>
    <property type="project" value="UniProtKB"/>
</dbReference>
<dbReference type="GO" id="GO:0071805">
    <property type="term" value="P:potassium ion transmembrane transport"/>
    <property type="evidence" value="ECO:0000250"/>
    <property type="project" value="UniProtKB"/>
</dbReference>
<dbReference type="FunFam" id="1.10.3860.10:FF:000002">
    <property type="entry name" value="Amino acid transporter"/>
    <property type="match status" value="1"/>
</dbReference>
<dbReference type="Gene3D" id="1.10.3860.10">
    <property type="entry name" value="Sodium:dicarboxylate symporter"/>
    <property type="match status" value="1"/>
</dbReference>
<dbReference type="InterPro" id="IPR050746">
    <property type="entry name" value="DAACS"/>
</dbReference>
<dbReference type="InterPro" id="IPR001991">
    <property type="entry name" value="Na-dicarboxylate_symporter"/>
</dbReference>
<dbReference type="InterPro" id="IPR018107">
    <property type="entry name" value="Na-dicarboxylate_symporter_CS"/>
</dbReference>
<dbReference type="InterPro" id="IPR036458">
    <property type="entry name" value="Na:dicarbo_symporter_sf"/>
</dbReference>
<dbReference type="PANTHER" id="PTHR11958:SF24">
    <property type="entry name" value="EXCITATORY AMINO ACID TRANSPORTER 1"/>
    <property type="match status" value="1"/>
</dbReference>
<dbReference type="PANTHER" id="PTHR11958">
    <property type="entry name" value="SODIUM/DICARBOXYLATE SYMPORTER-RELATED"/>
    <property type="match status" value="1"/>
</dbReference>
<dbReference type="Pfam" id="PF00375">
    <property type="entry name" value="SDF"/>
    <property type="match status" value="1"/>
</dbReference>
<dbReference type="PRINTS" id="PR00173">
    <property type="entry name" value="EDTRNSPORT"/>
</dbReference>
<dbReference type="SUPFAM" id="SSF118215">
    <property type="entry name" value="Proton glutamate symport protein"/>
    <property type="match status" value="1"/>
</dbReference>
<dbReference type="PROSITE" id="PS00713">
    <property type="entry name" value="NA_DICARBOXYL_SYMP_1"/>
    <property type="match status" value="1"/>
</dbReference>
<dbReference type="PROSITE" id="PS00714">
    <property type="entry name" value="NA_DICARBOXYL_SYMP_2"/>
    <property type="match status" value="1"/>
</dbReference>